<proteinExistence type="evidence at protein level"/>
<protein>
    <recommendedName>
        <fullName evidence="11">Protein CHROMATIN REMODELING 19</fullName>
        <shortName>AtCHR19</shortName>
        <ecNumber>3.6.4.-</ecNumber>
    </recommendedName>
    <alternativeName>
        <fullName evidence="10">AtRAD54-like protein</fullName>
    </alternativeName>
</protein>
<name>CHR19_ARATH</name>
<evidence type="ECO:0000250" key="1">
    <source>
        <dbReference type="UniProtKB" id="P31380"/>
    </source>
</evidence>
<evidence type="ECO:0000255" key="2"/>
<evidence type="ECO:0000255" key="3">
    <source>
        <dbReference type="PROSITE-ProRule" id="PRU00541"/>
    </source>
</evidence>
<evidence type="ECO:0000255" key="4">
    <source>
        <dbReference type="PROSITE-ProRule" id="PRU00542"/>
    </source>
</evidence>
<evidence type="ECO:0000255" key="5">
    <source>
        <dbReference type="PROSITE-ProRule" id="PRU00768"/>
    </source>
</evidence>
<evidence type="ECO:0000256" key="6">
    <source>
        <dbReference type="SAM" id="MobiDB-lite"/>
    </source>
</evidence>
<evidence type="ECO:0000269" key="7">
    <source>
    </source>
</evidence>
<evidence type="ECO:0000269" key="8">
    <source>
    </source>
</evidence>
<evidence type="ECO:0000269" key="9">
    <source>
    </source>
</evidence>
<evidence type="ECO:0000303" key="10">
    <source>
    </source>
</evidence>
<evidence type="ECO:0000303" key="11">
    <source>
    </source>
</evidence>
<evidence type="ECO:0000305" key="12"/>
<evidence type="ECO:0000312" key="13">
    <source>
        <dbReference type="Araport" id="AT2G02090"/>
    </source>
</evidence>
<evidence type="ECO:0000312" key="14">
    <source>
        <dbReference type="EMBL" id="AAL24339.1"/>
    </source>
</evidence>
<evidence type="ECO:0000312" key="15">
    <source>
        <dbReference type="EMBL" id="AEC05545.1"/>
    </source>
</evidence>
<evidence type="ECO:0000312" key="16">
    <source>
        <dbReference type="Proteomes" id="UP000006548"/>
    </source>
</evidence>
<comment type="function">
    <text evidence="1 9 11">DNA helicase that possesses intrinsic ATP-dependent nucleosome-remodeling activity and is both required for DNA repair and heterochromatin organization. Promotes DNA end resection of double-strand breaks (DSBs) following DNA damage: probably acts by weakening histone DNA interactions in nucleosomes flanking DSBs (By similarity). Probable chromatin remodeling factor. Probable helicase-like transcription factor involved in transcriptional gene silencing. Associates with SUVR2 and contributes to transcriptional gene silencing at RNA-directed DNA methylation (RdDM) target loci but also at RdDM-independent target loci. May be involved in nucleosome positioning to form ordered nucleosome arrays on chromatin (PubMed:25420628).</text>
</comment>
<comment type="subunit">
    <text evidence="9">Interacts with SUVR2 and itself.</text>
</comment>
<comment type="subcellular location">
    <subcellularLocation>
        <location evidence="5 9">Nucleus</location>
    </subcellularLocation>
</comment>
<comment type="induction">
    <text evidence="7 8">By UV-C illumination (PubMed:15053760). Accumulates in response to the mutagens rose Bengal (RB) and methyl methane sulfonate (MMS) (PubMed:15133154).</text>
</comment>
<comment type="miscellaneous">
    <text evidence="8">Induction by the mutagens rose Bengal (RB) and methyl methane sulfonate (MMS) is enhanced in progeny of Chernobyl plants exposed to ionizing radiation thus leading to a higher resistance to DNA damages.</text>
</comment>
<comment type="similarity">
    <text evidence="12">Belongs to the SNF2/RAD54 helicase family.</text>
</comment>
<dbReference type="EC" id="3.6.4.-"/>
<dbReference type="EMBL" id="AC005936">
    <property type="protein sequence ID" value="AAC97224.1"/>
    <property type="molecule type" value="Genomic_DNA"/>
</dbReference>
<dbReference type="EMBL" id="CP002685">
    <property type="protein sequence ID" value="AEC05545.1"/>
    <property type="molecule type" value="Genomic_DNA"/>
</dbReference>
<dbReference type="EMBL" id="AY059857">
    <property type="protein sequence ID" value="AAL24339.1"/>
    <property type="molecule type" value="mRNA"/>
</dbReference>
<dbReference type="EMBL" id="BT002576">
    <property type="protein sequence ID" value="AAO00936.1"/>
    <property type="molecule type" value="mRNA"/>
</dbReference>
<dbReference type="PIR" id="H84432">
    <property type="entry name" value="H84432"/>
</dbReference>
<dbReference type="RefSeq" id="NP_178318.1">
    <property type="nucleotide sequence ID" value="NM_126270.2"/>
</dbReference>
<dbReference type="SMR" id="Q9ZUL5"/>
<dbReference type="BioGRID" id="143">
    <property type="interactions" value="10"/>
</dbReference>
<dbReference type="FunCoup" id="Q9ZUL5">
    <property type="interactions" value="3989"/>
</dbReference>
<dbReference type="IntAct" id="Q9ZUL5">
    <property type="interactions" value="3"/>
</dbReference>
<dbReference type="STRING" id="3702.Q9ZUL5"/>
<dbReference type="GlyGen" id="Q9ZUL5">
    <property type="glycosylation" value="1 site"/>
</dbReference>
<dbReference type="iPTMnet" id="Q9ZUL5"/>
<dbReference type="PaxDb" id="3702-AT2G02090.1"/>
<dbReference type="ProteomicsDB" id="246784"/>
<dbReference type="EnsemblPlants" id="AT2G02090.1">
    <property type="protein sequence ID" value="AT2G02090.1"/>
    <property type="gene ID" value="AT2G02090"/>
</dbReference>
<dbReference type="GeneID" id="814740"/>
<dbReference type="Gramene" id="AT2G02090.1">
    <property type="protein sequence ID" value="AT2G02090.1"/>
    <property type="gene ID" value="AT2G02090"/>
</dbReference>
<dbReference type="KEGG" id="ath:AT2G02090"/>
<dbReference type="Araport" id="AT2G02090"/>
<dbReference type="TAIR" id="AT2G02090">
    <property type="gene designation" value="ETL1"/>
</dbReference>
<dbReference type="eggNOG" id="KOG0389">
    <property type="taxonomic scope" value="Eukaryota"/>
</dbReference>
<dbReference type="HOGENOM" id="CLU_000315_16_6_1"/>
<dbReference type="InParanoid" id="Q9ZUL5"/>
<dbReference type="OMA" id="STRNCES"/>
<dbReference type="PhylomeDB" id="Q9ZUL5"/>
<dbReference type="PRO" id="PR:Q9ZUL5"/>
<dbReference type="Proteomes" id="UP000006548">
    <property type="component" value="Chromosome 2"/>
</dbReference>
<dbReference type="ExpressionAtlas" id="Q9ZUL5">
    <property type="expression patterns" value="baseline and differential"/>
</dbReference>
<dbReference type="GO" id="GO:0005634">
    <property type="term" value="C:nucleus"/>
    <property type="evidence" value="ECO:0007669"/>
    <property type="project" value="UniProtKB-SubCell"/>
</dbReference>
<dbReference type="GO" id="GO:0005524">
    <property type="term" value="F:ATP binding"/>
    <property type="evidence" value="ECO:0007669"/>
    <property type="project" value="UniProtKB-KW"/>
</dbReference>
<dbReference type="GO" id="GO:0003677">
    <property type="term" value="F:DNA binding"/>
    <property type="evidence" value="ECO:0007669"/>
    <property type="project" value="UniProtKB-KW"/>
</dbReference>
<dbReference type="GO" id="GO:0004386">
    <property type="term" value="F:helicase activity"/>
    <property type="evidence" value="ECO:0007669"/>
    <property type="project" value="UniProtKB-KW"/>
</dbReference>
<dbReference type="GO" id="GO:0016787">
    <property type="term" value="F:hydrolase activity"/>
    <property type="evidence" value="ECO:0007669"/>
    <property type="project" value="UniProtKB-KW"/>
</dbReference>
<dbReference type="GO" id="GO:0071494">
    <property type="term" value="P:cellular response to UV-C"/>
    <property type="evidence" value="ECO:0000270"/>
    <property type="project" value="UniProtKB"/>
</dbReference>
<dbReference type="GO" id="GO:0006325">
    <property type="term" value="P:chromatin organization"/>
    <property type="evidence" value="ECO:0007669"/>
    <property type="project" value="UniProtKB-KW"/>
</dbReference>
<dbReference type="GO" id="GO:0006974">
    <property type="term" value="P:DNA damage response"/>
    <property type="evidence" value="ECO:0000270"/>
    <property type="project" value="UniProtKB"/>
</dbReference>
<dbReference type="GO" id="GO:0006281">
    <property type="term" value="P:DNA repair"/>
    <property type="evidence" value="ECO:0007669"/>
    <property type="project" value="UniProtKB-KW"/>
</dbReference>
<dbReference type="GO" id="GO:0031047">
    <property type="term" value="P:regulatory ncRNA-mediated gene silencing"/>
    <property type="evidence" value="ECO:0007669"/>
    <property type="project" value="UniProtKB-KW"/>
</dbReference>
<dbReference type="CDD" id="cd17919">
    <property type="entry name" value="DEXHc_Snf"/>
    <property type="match status" value="1"/>
</dbReference>
<dbReference type="CDD" id="cd18793">
    <property type="entry name" value="SF2_C_SNF"/>
    <property type="match status" value="1"/>
</dbReference>
<dbReference type="FunFam" id="3.40.50.10810:FF:000038">
    <property type="entry name" value="Protein CHROMATIN REMODELING 19 isoform A"/>
    <property type="match status" value="1"/>
</dbReference>
<dbReference type="Gene3D" id="3.40.50.300">
    <property type="entry name" value="P-loop containing nucleotide triphosphate hydrolases"/>
    <property type="match status" value="2"/>
</dbReference>
<dbReference type="Gene3D" id="3.40.50.10810">
    <property type="entry name" value="Tandem AAA-ATPase domain"/>
    <property type="match status" value="1"/>
</dbReference>
<dbReference type="InterPro" id="IPR014001">
    <property type="entry name" value="Helicase_ATP-bd"/>
</dbReference>
<dbReference type="InterPro" id="IPR001650">
    <property type="entry name" value="Helicase_C-like"/>
</dbReference>
<dbReference type="InterPro" id="IPR027417">
    <property type="entry name" value="P-loop_NTPase"/>
</dbReference>
<dbReference type="InterPro" id="IPR038718">
    <property type="entry name" value="SNF2-like_sf"/>
</dbReference>
<dbReference type="InterPro" id="IPR049730">
    <property type="entry name" value="SNF2/RAD54-like_C"/>
</dbReference>
<dbReference type="InterPro" id="IPR000330">
    <property type="entry name" value="SNF2_N"/>
</dbReference>
<dbReference type="PANTHER" id="PTHR10799">
    <property type="entry name" value="SNF2/RAD54 HELICASE FAMILY"/>
    <property type="match status" value="1"/>
</dbReference>
<dbReference type="Pfam" id="PF00271">
    <property type="entry name" value="Helicase_C"/>
    <property type="match status" value="1"/>
</dbReference>
<dbReference type="Pfam" id="PF00176">
    <property type="entry name" value="SNF2-rel_dom"/>
    <property type="match status" value="1"/>
</dbReference>
<dbReference type="SMART" id="SM00487">
    <property type="entry name" value="DEXDc"/>
    <property type="match status" value="1"/>
</dbReference>
<dbReference type="SMART" id="SM00490">
    <property type="entry name" value="HELICc"/>
    <property type="match status" value="1"/>
</dbReference>
<dbReference type="SUPFAM" id="SSF52540">
    <property type="entry name" value="P-loop containing nucleoside triphosphate hydrolases"/>
    <property type="match status" value="2"/>
</dbReference>
<dbReference type="PROSITE" id="PS51192">
    <property type="entry name" value="HELICASE_ATP_BIND_1"/>
    <property type="match status" value="1"/>
</dbReference>
<dbReference type="PROSITE" id="PS51194">
    <property type="entry name" value="HELICASE_CTER"/>
    <property type="match status" value="1"/>
</dbReference>
<keyword id="KW-0067">ATP-binding</keyword>
<keyword id="KW-0156">Chromatin regulator</keyword>
<keyword id="KW-0175">Coiled coil</keyword>
<keyword id="KW-0227">DNA damage</keyword>
<keyword id="KW-0234">DNA repair</keyword>
<keyword id="KW-0238">DNA-binding</keyword>
<keyword id="KW-0347">Helicase</keyword>
<keyword id="KW-0378">Hydrolase</keyword>
<keyword id="KW-0547">Nucleotide-binding</keyword>
<keyword id="KW-0539">Nucleus</keyword>
<keyword id="KW-1185">Reference proteome</keyword>
<keyword id="KW-0943">RNA-mediated gene silencing</keyword>
<keyword id="KW-0804">Transcription</keyword>
<keyword id="KW-0805">Transcription regulation</keyword>
<reference key="1">
    <citation type="journal article" date="1999" name="Nature">
        <title>Sequence and analysis of chromosome 2 of the plant Arabidopsis thaliana.</title>
        <authorList>
            <person name="Lin X."/>
            <person name="Kaul S."/>
            <person name="Rounsley S.D."/>
            <person name="Shea T.P."/>
            <person name="Benito M.-I."/>
            <person name="Town C.D."/>
            <person name="Fujii C.Y."/>
            <person name="Mason T.M."/>
            <person name="Bowman C.L."/>
            <person name="Barnstead M.E."/>
            <person name="Feldblyum T.V."/>
            <person name="Buell C.R."/>
            <person name="Ketchum K.A."/>
            <person name="Lee J.J."/>
            <person name="Ronning C.M."/>
            <person name="Koo H.L."/>
            <person name="Moffat K.S."/>
            <person name="Cronin L.A."/>
            <person name="Shen M."/>
            <person name="Pai G."/>
            <person name="Van Aken S."/>
            <person name="Umayam L."/>
            <person name="Tallon L.J."/>
            <person name="Gill J.E."/>
            <person name="Adams M.D."/>
            <person name="Carrera A.J."/>
            <person name="Creasy T.H."/>
            <person name="Goodman H.M."/>
            <person name="Somerville C.R."/>
            <person name="Copenhaver G.P."/>
            <person name="Preuss D."/>
            <person name="Nierman W.C."/>
            <person name="White O."/>
            <person name="Eisen J.A."/>
            <person name="Salzberg S.L."/>
            <person name="Fraser C.M."/>
            <person name="Venter J.C."/>
        </authorList>
    </citation>
    <scope>NUCLEOTIDE SEQUENCE [LARGE SCALE GENOMIC DNA]</scope>
    <source>
        <strain>cv. Columbia</strain>
    </source>
</reference>
<reference key="2">
    <citation type="journal article" date="2017" name="Plant J.">
        <title>Araport11: a complete reannotation of the Arabidopsis thaliana reference genome.</title>
        <authorList>
            <person name="Cheng C.Y."/>
            <person name="Krishnakumar V."/>
            <person name="Chan A.P."/>
            <person name="Thibaud-Nissen F."/>
            <person name="Schobel S."/>
            <person name="Town C.D."/>
        </authorList>
    </citation>
    <scope>GENOME REANNOTATION</scope>
    <source>
        <strain>cv. Columbia</strain>
    </source>
</reference>
<reference key="3">
    <citation type="journal article" date="2003" name="Science">
        <title>Empirical analysis of transcriptional activity in the Arabidopsis genome.</title>
        <authorList>
            <person name="Yamada K."/>
            <person name="Lim J."/>
            <person name="Dale J.M."/>
            <person name="Chen H."/>
            <person name="Shinn P."/>
            <person name="Palm C.J."/>
            <person name="Southwick A.M."/>
            <person name="Wu H.C."/>
            <person name="Kim C.J."/>
            <person name="Nguyen M."/>
            <person name="Pham P.K."/>
            <person name="Cheuk R.F."/>
            <person name="Karlin-Newmann G."/>
            <person name="Liu S.X."/>
            <person name="Lam B."/>
            <person name="Sakano H."/>
            <person name="Wu T."/>
            <person name="Yu G."/>
            <person name="Miranda M."/>
            <person name="Quach H.L."/>
            <person name="Tripp M."/>
            <person name="Chang C.H."/>
            <person name="Lee J.M."/>
            <person name="Toriumi M.J."/>
            <person name="Chan M.M."/>
            <person name="Tang C.C."/>
            <person name="Onodera C.S."/>
            <person name="Deng J.M."/>
            <person name="Akiyama K."/>
            <person name="Ansari Y."/>
            <person name="Arakawa T."/>
            <person name="Banh J."/>
            <person name="Banno F."/>
            <person name="Bowser L."/>
            <person name="Brooks S.Y."/>
            <person name="Carninci P."/>
            <person name="Chao Q."/>
            <person name="Choy N."/>
            <person name="Enju A."/>
            <person name="Goldsmith A.D."/>
            <person name="Gurjal M."/>
            <person name="Hansen N.F."/>
            <person name="Hayashizaki Y."/>
            <person name="Johnson-Hopson C."/>
            <person name="Hsuan V.W."/>
            <person name="Iida K."/>
            <person name="Karnes M."/>
            <person name="Khan S."/>
            <person name="Koesema E."/>
            <person name="Ishida J."/>
            <person name="Jiang P.X."/>
            <person name="Jones T."/>
            <person name="Kawai J."/>
            <person name="Kamiya A."/>
            <person name="Meyers C."/>
            <person name="Nakajima M."/>
            <person name="Narusaka M."/>
            <person name="Seki M."/>
            <person name="Sakurai T."/>
            <person name="Satou M."/>
            <person name="Tamse R."/>
            <person name="Vaysberg M."/>
            <person name="Wallender E.K."/>
            <person name="Wong C."/>
            <person name="Yamamura Y."/>
            <person name="Yuan S."/>
            <person name="Shinozaki K."/>
            <person name="Davis R.W."/>
            <person name="Theologis A."/>
            <person name="Ecker J.R."/>
        </authorList>
    </citation>
    <scope>NUCLEOTIDE SEQUENCE [LARGE SCALE MRNA]</scope>
    <source>
        <strain>cv. Columbia</strain>
    </source>
</reference>
<reference key="4">
    <citation type="journal article" date="2004" name="Plant J.">
        <title>Genome stability of vtc1, tt4, and tt5 Arabidopsis thaliana mutants impaired in protection against oxidative stress.</title>
        <authorList>
            <person name="Filkowski J."/>
            <person name="Kovalchuk O."/>
            <person name="Kovalchuk I."/>
        </authorList>
    </citation>
    <scope>INDUCTION BY UV-C</scope>
    <source>
        <strain>cv. C24</strain>
    </source>
</reference>
<reference key="5">
    <citation type="journal article" date="2004" name="Plant Physiol.">
        <title>Molecular aspects of plant adaptation to life in the Chernobyl zone.</title>
        <authorList>
            <person name="Kovalchuk I."/>
            <person name="Abramov V."/>
            <person name="Pogribny I."/>
            <person name="Kovalchuk O."/>
        </authorList>
    </citation>
    <scope>INDUCTION BY ROSE BENGAL AND METHYL METHANE SULFONATE</scope>
</reference>
<reference key="6">
    <citation type="journal article" date="2006" name="Genetics">
        <title>Involvement of the Arabidopsis SWI2/SNF2 chromatin remodeling gene family in DNA damage response and recombination.</title>
        <authorList>
            <person name="Shaked H."/>
            <person name="Avivi-Ragolsky N."/>
            <person name="Levy A.A."/>
        </authorList>
    </citation>
    <scope>GENE FAMILY</scope>
    <scope>NOMENCLATURE</scope>
</reference>
<reference key="7">
    <citation type="journal article" date="2013" name="PLoS ONE">
        <title>Genome-wide comparative in silico analysis of the RNA helicase gene family in Zea mays and Glycine max: a comparison with Arabidopsis and Oryza sativa.</title>
        <authorList>
            <person name="Xu R."/>
            <person name="Zhang S."/>
            <person name="Huang J."/>
            <person name="Zheng C."/>
        </authorList>
    </citation>
    <scope>GENE FAMILY</scope>
</reference>
<reference key="8">
    <citation type="journal article" date="2014" name="Cell Res.">
        <title>SUVR2 is involved in transcriptional gene silencing by associating with SNF2-related chromatin-remodeling proteins in Arabidopsis.</title>
        <authorList>
            <person name="Han Y.F."/>
            <person name="Dou K."/>
            <person name="Ma Z.Y."/>
            <person name="Zhang S.W."/>
            <person name="Huang H.W."/>
            <person name="Li L."/>
            <person name="Cai T."/>
            <person name="Chen S."/>
            <person name="Zhu J.K."/>
            <person name="He X.J."/>
        </authorList>
    </citation>
    <scope>IDENTIFICATION BY MASS SPECTROMETRY</scope>
    <scope>FUNCTION</scope>
    <scope>SUBUNIT</scope>
    <scope>INTERACTION WITH SUVR2</scope>
    <scope>SUBCELLULAR LOCATION</scope>
</reference>
<organism evidence="16">
    <name type="scientific">Arabidopsis thaliana</name>
    <name type="common">Mouse-ear cress</name>
    <dbReference type="NCBI Taxonomy" id="3702"/>
    <lineage>
        <taxon>Eukaryota</taxon>
        <taxon>Viridiplantae</taxon>
        <taxon>Streptophyta</taxon>
        <taxon>Embryophyta</taxon>
        <taxon>Tracheophyta</taxon>
        <taxon>Spermatophyta</taxon>
        <taxon>Magnoliopsida</taxon>
        <taxon>eudicotyledons</taxon>
        <taxon>Gunneridae</taxon>
        <taxon>Pentapetalae</taxon>
        <taxon>rosids</taxon>
        <taxon>malvids</taxon>
        <taxon>Brassicales</taxon>
        <taxon>Brassicaceae</taxon>
        <taxon>Camelineae</taxon>
        <taxon>Arabidopsis</taxon>
    </lineage>
</organism>
<sequence length="763" mass="86277">MKRDFDEISEEEWSQHSFNASRVLKRPRTPKKTRAATNPTPSIESFAFRRPSTAMTIESNSSDGDCVEIEDLGDSDSDVKIVNGEDLLLEDEEEVEETKVVMRAARVGRRFVIEDEEASDDDDDEAESSASEDEFGGGGGGSGGRRGEDEDVVGKALQKCAKISADLRKELYGTSSGVTDRYSEVETSTVRIVTQNDIDDACKAEDSDFQPILKPYQLVGVNFLLLLYKKGIEGAILADEMGLGKTIQAITYLTLLSRLNNDPGPHLVVCPASVLENWERELRKWCPSFTVLQYHGAARAAYSRELNSLSKAGKPPPFNVLLVCYSLFERHSEQQKDDRKVLKRWRWSCVLMDEAHALKDKNSYRWKNLMSVARNANQRLMLTGTPLQNDLHELWSLLEFMLPDIFTTENVDLKKLLNAEDTELITRMKSILGPFILRRLKSDVMQQLVPKIQRVEYVLMERKQEDAYKEAIEEYRAASQARLVKLSSKSLNSLAKALPKRQISNYFTQFRKIANHPLLIRRIYSDEDVIRIARKLHPIGAFGFECSLDRVIEEVKGFNDFRIHQLLFQYGVNDTKGTLSDKHVMLSAKCRTLAELLPSMKKSGHRVLIFSQWTSMLDILEWTLDVIGVTYRRLDGSTQVTDRQTIVDTFNNDKSIFACLLSTRAGGQGLNLTGADTVIIHDMDFNPQIDRQAEDRCHRIGQTKPVTIFRLVTKSTVDENIYEIAKRKLVLDAAVLESGVHVDDNGDTPEKTMGEILASLLMG</sequence>
<feature type="chain" id="PRO_0000430856" description="Protein CHROMATIN REMODELING 19">
    <location>
        <begin position="1"/>
        <end position="763"/>
    </location>
</feature>
<feature type="domain" description="Helicase ATP-binding" evidence="3">
    <location>
        <begin position="226"/>
        <end position="404"/>
    </location>
</feature>
<feature type="domain" description="Helicase C-terminal" evidence="4">
    <location>
        <begin position="592"/>
        <end position="742"/>
    </location>
</feature>
<feature type="region of interest" description="Disordered" evidence="6">
    <location>
        <begin position="1"/>
        <end position="43"/>
    </location>
</feature>
<feature type="region of interest" description="Disordered" evidence="6">
    <location>
        <begin position="114"/>
        <end position="149"/>
    </location>
</feature>
<feature type="coiled-coil region" evidence="2">
    <location>
        <begin position="462"/>
        <end position="482"/>
    </location>
</feature>
<feature type="short sequence motif" description="DEAH box" evidence="3">
    <location>
        <begin position="353"/>
        <end position="356"/>
    </location>
</feature>
<feature type="short sequence motif" description="Nuclear localization signal" evidence="5">
    <location>
        <begin position="520"/>
        <end position="527"/>
    </location>
</feature>
<feature type="compositionally biased region" description="Basic residues" evidence="6">
    <location>
        <begin position="23"/>
        <end position="34"/>
    </location>
</feature>
<feature type="compositionally biased region" description="Acidic residues" evidence="6">
    <location>
        <begin position="114"/>
        <end position="135"/>
    </location>
</feature>
<feature type="binding site" evidence="3">
    <location>
        <begin position="239"/>
        <end position="246"/>
    </location>
    <ligand>
        <name>ATP</name>
        <dbReference type="ChEBI" id="CHEBI:30616"/>
    </ligand>
</feature>
<gene>
    <name evidence="15" type="primary">ETL1</name>
    <name evidence="11" type="synonym">CHR19</name>
    <name evidence="13" type="ordered locus">At2g02090</name>
    <name evidence="14" type="ORF">F5O4.14</name>
</gene>
<accession>Q9ZUL5</accession>